<keyword id="KW-0067">ATP-binding</keyword>
<keyword id="KW-0119">Carbohydrate metabolism</keyword>
<keyword id="KW-0418">Kinase</keyword>
<keyword id="KW-0547">Nucleotide-binding</keyword>
<keyword id="KW-1185">Reference proteome</keyword>
<keyword id="KW-0808">Transferase</keyword>
<evidence type="ECO:0000255" key="1">
    <source>
        <dbReference type="HAMAP-Rule" id="MF_01270"/>
    </source>
</evidence>
<protein>
    <recommendedName>
        <fullName evidence="1">Anhydro-N-acetylmuramic acid kinase</fullName>
        <ecNumber evidence="1">2.7.1.170</ecNumber>
    </recommendedName>
    <alternativeName>
        <fullName evidence="1">AnhMurNAc kinase</fullName>
    </alternativeName>
</protein>
<gene>
    <name evidence="1" type="primary">anmK</name>
    <name type="ordered locus">NGO_1583</name>
</gene>
<comment type="function">
    <text evidence="1">Catalyzes the specific phosphorylation of 1,6-anhydro-N-acetylmuramic acid (anhMurNAc) with the simultaneous cleavage of the 1,6-anhydro ring, generating MurNAc-6-P. Is required for the utilization of anhMurNAc either imported from the medium or derived from its own cell wall murein, and thus plays a role in cell wall recycling.</text>
</comment>
<comment type="catalytic activity">
    <reaction evidence="1">
        <text>1,6-anhydro-N-acetyl-beta-muramate + ATP + H2O = N-acetyl-D-muramate 6-phosphate + ADP + H(+)</text>
        <dbReference type="Rhea" id="RHEA:24952"/>
        <dbReference type="ChEBI" id="CHEBI:15377"/>
        <dbReference type="ChEBI" id="CHEBI:15378"/>
        <dbReference type="ChEBI" id="CHEBI:30616"/>
        <dbReference type="ChEBI" id="CHEBI:58690"/>
        <dbReference type="ChEBI" id="CHEBI:58722"/>
        <dbReference type="ChEBI" id="CHEBI:456216"/>
        <dbReference type="EC" id="2.7.1.170"/>
    </reaction>
</comment>
<comment type="pathway">
    <text evidence="1">Amino-sugar metabolism; 1,6-anhydro-N-acetylmuramate degradation.</text>
</comment>
<comment type="pathway">
    <text evidence="1">Cell wall biogenesis; peptidoglycan recycling.</text>
</comment>
<comment type="similarity">
    <text evidence="1">Belongs to the anhydro-N-acetylmuramic acid kinase family.</text>
</comment>
<proteinExistence type="inferred from homology"/>
<feature type="chain" id="PRO_0000250013" description="Anhydro-N-acetylmuramic acid kinase">
    <location>
        <begin position="1"/>
        <end position="367"/>
    </location>
</feature>
<feature type="binding site" evidence="1">
    <location>
        <begin position="13"/>
        <end position="20"/>
    </location>
    <ligand>
        <name>ATP</name>
        <dbReference type="ChEBI" id="CHEBI:30616"/>
    </ligand>
</feature>
<dbReference type="EC" id="2.7.1.170" evidence="1"/>
<dbReference type="EMBL" id="AE004969">
    <property type="protein sequence ID" value="AAW90212.2"/>
    <property type="molecule type" value="Genomic_DNA"/>
</dbReference>
<dbReference type="SMR" id="Q5F6H5"/>
<dbReference type="STRING" id="242231.NGO_1583"/>
<dbReference type="KEGG" id="ngo:NGO_1583"/>
<dbReference type="HOGENOM" id="CLU_038782_0_0_4"/>
<dbReference type="UniPathway" id="UPA00343"/>
<dbReference type="UniPathway" id="UPA00544"/>
<dbReference type="Proteomes" id="UP000000535">
    <property type="component" value="Chromosome"/>
</dbReference>
<dbReference type="GO" id="GO:0005524">
    <property type="term" value="F:ATP binding"/>
    <property type="evidence" value="ECO:0007669"/>
    <property type="project" value="UniProtKB-UniRule"/>
</dbReference>
<dbReference type="GO" id="GO:0016301">
    <property type="term" value="F:kinase activity"/>
    <property type="evidence" value="ECO:0007669"/>
    <property type="project" value="UniProtKB-KW"/>
</dbReference>
<dbReference type="GO" id="GO:0016773">
    <property type="term" value="F:phosphotransferase activity, alcohol group as acceptor"/>
    <property type="evidence" value="ECO:0007669"/>
    <property type="project" value="UniProtKB-UniRule"/>
</dbReference>
<dbReference type="GO" id="GO:0097175">
    <property type="term" value="P:1,6-anhydro-N-acetyl-beta-muramic acid catabolic process"/>
    <property type="evidence" value="ECO:0007669"/>
    <property type="project" value="UniProtKB-UniRule"/>
</dbReference>
<dbReference type="GO" id="GO:0006040">
    <property type="term" value="P:amino sugar metabolic process"/>
    <property type="evidence" value="ECO:0007669"/>
    <property type="project" value="InterPro"/>
</dbReference>
<dbReference type="GO" id="GO:0009254">
    <property type="term" value="P:peptidoglycan turnover"/>
    <property type="evidence" value="ECO:0007669"/>
    <property type="project" value="UniProtKB-UniRule"/>
</dbReference>
<dbReference type="CDD" id="cd24050">
    <property type="entry name" value="ASKHA_NBD_ANMK"/>
    <property type="match status" value="1"/>
</dbReference>
<dbReference type="Gene3D" id="3.30.420.40">
    <property type="match status" value="2"/>
</dbReference>
<dbReference type="HAMAP" id="MF_01270">
    <property type="entry name" value="AnhMurNAc_kinase"/>
    <property type="match status" value="1"/>
</dbReference>
<dbReference type="InterPro" id="IPR005338">
    <property type="entry name" value="Anhydro_N_Ac-Mur_kinase"/>
</dbReference>
<dbReference type="InterPro" id="IPR043129">
    <property type="entry name" value="ATPase_NBD"/>
</dbReference>
<dbReference type="NCBIfam" id="NF007139">
    <property type="entry name" value="PRK09585.1-3"/>
    <property type="match status" value="1"/>
</dbReference>
<dbReference type="PANTHER" id="PTHR30605">
    <property type="entry name" value="ANHYDRO-N-ACETYLMURAMIC ACID KINASE"/>
    <property type="match status" value="1"/>
</dbReference>
<dbReference type="PANTHER" id="PTHR30605:SF0">
    <property type="entry name" value="ANHYDRO-N-ACETYLMURAMIC ACID KINASE"/>
    <property type="match status" value="1"/>
</dbReference>
<dbReference type="Pfam" id="PF03702">
    <property type="entry name" value="AnmK"/>
    <property type="match status" value="1"/>
</dbReference>
<dbReference type="SUPFAM" id="SSF53067">
    <property type="entry name" value="Actin-like ATPase domain"/>
    <property type="match status" value="1"/>
</dbReference>
<name>ANMK_NEIG1</name>
<accession>Q5F6H5</accession>
<organism>
    <name type="scientific">Neisseria gonorrhoeae (strain ATCC 700825 / FA 1090)</name>
    <dbReference type="NCBI Taxonomy" id="242231"/>
    <lineage>
        <taxon>Bacteria</taxon>
        <taxon>Pseudomonadati</taxon>
        <taxon>Pseudomonadota</taxon>
        <taxon>Betaproteobacteria</taxon>
        <taxon>Neisseriales</taxon>
        <taxon>Neisseriaceae</taxon>
        <taxon>Neisseria</taxon>
    </lineage>
</organism>
<reference key="1">
    <citation type="submission" date="2003-03" db="EMBL/GenBank/DDBJ databases">
        <title>The complete genome sequence of Neisseria gonorrhoeae.</title>
        <authorList>
            <person name="Lewis L.A."/>
            <person name="Gillaspy A.F."/>
            <person name="McLaughlin R.E."/>
            <person name="Gipson M."/>
            <person name="Ducey T.F."/>
            <person name="Ownbey T."/>
            <person name="Hartman K."/>
            <person name="Nydick C."/>
            <person name="Carson M.B."/>
            <person name="Vaughn J."/>
            <person name="Thomson C."/>
            <person name="Song L."/>
            <person name="Lin S."/>
            <person name="Yuan X."/>
            <person name="Najar F."/>
            <person name="Zhan M."/>
            <person name="Ren Q."/>
            <person name="Zhu H."/>
            <person name="Qi S."/>
            <person name="Kenton S.M."/>
            <person name="Lai H."/>
            <person name="White J.D."/>
            <person name="Clifton S."/>
            <person name="Roe B.A."/>
            <person name="Dyer D.W."/>
        </authorList>
    </citation>
    <scope>NUCLEOTIDE SEQUENCE [LARGE SCALE GENOMIC DNA]</scope>
    <source>
        <strain>ATCC 700825 / FA 1090</strain>
    </source>
</reference>
<sequence length="367" mass="39995">MMETQLYIGIMSGTSMDGADAVLVRMDGGKWLGAEGHAFTPYPDRLRRKLLDLQDTGTDELHRSRMLSQELSRLYAQTAAELLCSQNLAPCDITALGCHGQTVRHAPEHGYSIQLADLPLLAELTRIFTVGDFRSRDLAAGGQGAPLVPAFHEALFRDDRETRVVLNIGGIANISVLPPGAPAFGFDTGPGNMLMDAWTQAHWQLPYDKNGAKAAQGNILPQLLGRLLAHPYFSQPHPKSTGRELFALNWLETYLDGGENRYDVLRTLSRFTAQTVCDAVSHAAADARQMYICGGGIRNPVLMADLAECFGTRVSLHSTAELNLDPQWVEAAAFAWLAACWINRIPGSPHKATGASKPCILGAGYYY</sequence>